<organism>
    <name type="scientific">Saccharomyces cerevisiae (strain ATCC 204508 / S288c)</name>
    <name type="common">Baker's yeast</name>
    <dbReference type="NCBI Taxonomy" id="559292"/>
    <lineage>
        <taxon>Eukaryota</taxon>
        <taxon>Fungi</taxon>
        <taxon>Dikarya</taxon>
        <taxon>Ascomycota</taxon>
        <taxon>Saccharomycotina</taxon>
        <taxon>Saccharomycetes</taxon>
        <taxon>Saccharomycetales</taxon>
        <taxon>Saccharomycetaceae</taxon>
        <taxon>Saccharomyces</taxon>
    </lineage>
</organism>
<protein>
    <recommendedName>
        <fullName>Processing of GAS1 and ALP protein 2</fullName>
    </recommendedName>
</protein>
<name>PGA2_YEAST</name>
<evidence type="ECO:0000255" key="1"/>
<evidence type="ECO:0000256" key="2">
    <source>
        <dbReference type="SAM" id="MobiDB-lite"/>
    </source>
</evidence>
<evidence type="ECO:0000269" key="3">
    <source>
    </source>
</evidence>
<evidence type="ECO:0000269" key="4">
    <source>
    </source>
</evidence>
<evidence type="ECO:0000269" key="5">
    <source ref="5"/>
</evidence>
<evidence type="ECO:0000305" key="6"/>
<evidence type="ECO:0007744" key="7">
    <source>
    </source>
</evidence>
<evidence type="ECO:0007744" key="8">
    <source>
    </source>
</evidence>
<evidence type="ECO:0007744" key="9">
    <source>
    </source>
</evidence>
<gene>
    <name type="primary">PGA2</name>
    <name type="ordered locus">YNL149C</name>
    <name type="ORF">N1774</name>
</gene>
<accession>P53903</accession>
<accession>D6W133</accession>
<reference key="1">
    <citation type="journal article" date="1996" name="Yeast">
        <title>The sequence of 36.8 kb from the left arm of chromosome XIV reveals 24 complete open reading frames: 18 correspond to new genes, one of which encodes a protein similar to the human myotonic dystrophy kinase.</title>
        <authorList>
            <person name="Nasr F."/>
            <person name="Becam A.-M."/>
            <person name="Herbert C.J."/>
        </authorList>
    </citation>
    <scope>NUCLEOTIDE SEQUENCE [GENOMIC DNA]</scope>
    <source>
        <strain>ATCC 96604 / S288c / FY1679</strain>
    </source>
</reference>
<reference key="2">
    <citation type="journal article" date="1997" name="Nature">
        <title>The nucleotide sequence of Saccharomyces cerevisiae chromosome XIV and its evolutionary implications.</title>
        <authorList>
            <person name="Philippsen P."/>
            <person name="Kleine K."/>
            <person name="Poehlmann R."/>
            <person name="Duesterhoeft A."/>
            <person name="Hamberg K."/>
            <person name="Hegemann J.H."/>
            <person name="Obermaier B."/>
            <person name="Urrestarazu L.A."/>
            <person name="Aert R."/>
            <person name="Albermann K."/>
            <person name="Altmann R."/>
            <person name="Andre B."/>
            <person name="Baladron V."/>
            <person name="Ballesta J.P.G."/>
            <person name="Becam A.-M."/>
            <person name="Beinhauer J.D."/>
            <person name="Boskovic J."/>
            <person name="Buitrago M.J."/>
            <person name="Bussereau F."/>
            <person name="Coster F."/>
            <person name="Crouzet M."/>
            <person name="D'Angelo M."/>
            <person name="Dal Pero F."/>
            <person name="De Antoni A."/>
            <person name="del Rey F."/>
            <person name="Doignon F."/>
            <person name="Domdey H."/>
            <person name="Dubois E."/>
            <person name="Fiedler T.A."/>
            <person name="Fleig U."/>
            <person name="Floeth M."/>
            <person name="Fritz C."/>
            <person name="Gaillardin C."/>
            <person name="Garcia-Cantalejo J.M."/>
            <person name="Glansdorff N."/>
            <person name="Goffeau A."/>
            <person name="Gueldener U."/>
            <person name="Herbert C.J."/>
            <person name="Heumann K."/>
            <person name="Heuss-Neitzel D."/>
            <person name="Hilbert H."/>
            <person name="Hinni K."/>
            <person name="Iraqui Houssaini I."/>
            <person name="Jacquet M."/>
            <person name="Jimenez A."/>
            <person name="Jonniaux J.-L."/>
            <person name="Karpfinger-Hartl L."/>
            <person name="Lanfranchi G."/>
            <person name="Lepingle A."/>
            <person name="Levesque H."/>
            <person name="Lyck R."/>
            <person name="Maftahi M."/>
            <person name="Mallet L."/>
            <person name="Maurer C.T.C."/>
            <person name="Messenguy F."/>
            <person name="Mewes H.-W."/>
            <person name="Moestl D."/>
            <person name="Nasr F."/>
            <person name="Nicaud J.-M."/>
            <person name="Niedenthal R.K."/>
            <person name="Pandolfo D."/>
            <person name="Pierard A."/>
            <person name="Piravandi E."/>
            <person name="Planta R.J."/>
            <person name="Pohl T.M."/>
            <person name="Purnelle B."/>
            <person name="Rebischung C."/>
            <person name="Remacha M.A."/>
            <person name="Revuelta J.L."/>
            <person name="Rinke M."/>
            <person name="Saiz J.E."/>
            <person name="Sartorello F."/>
            <person name="Scherens B."/>
            <person name="Sen-Gupta M."/>
            <person name="Soler-Mira A."/>
            <person name="Urbanus J.H.M."/>
            <person name="Valle G."/>
            <person name="Van Dyck L."/>
            <person name="Verhasselt P."/>
            <person name="Vierendeels F."/>
            <person name="Vissers S."/>
            <person name="Voet M."/>
            <person name="Volckaert G."/>
            <person name="Wach A."/>
            <person name="Wambutt R."/>
            <person name="Wedler H."/>
            <person name="Zollner A."/>
            <person name="Hani J."/>
        </authorList>
    </citation>
    <scope>NUCLEOTIDE SEQUENCE [LARGE SCALE GENOMIC DNA]</scope>
    <source>
        <strain>ATCC 204508 / S288c</strain>
    </source>
</reference>
<reference key="3">
    <citation type="journal article" date="2014" name="G3 (Bethesda)">
        <title>The reference genome sequence of Saccharomyces cerevisiae: Then and now.</title>
        <authorList>
            <person name="Engel S.R."/>
            <person name="Dietrich F.S."/>
            <person name="Fisk D.G."/>
            <person name="Binkley G."/>
            <person name="Balakrishnan R."/>
            <person name="Costanzo M.C."/>
            <person name="Dwight S.S."/>
            <person name="Hitz B.C."/>
            <person name="Karra K."/>
            <person name="Nash R.S."/>
            <person name="Weng S."/>
            <person name="Wong E.D."/>
            <person name="Lloyd P."/>
            <person name="Skrzypek M.S."/>
            <person name="Miyasato S.R."/>
            <person name="Simison M."/>
            <person name="Cherry J.M."/>
        </authorList>
    </citation>
    <scope>GENOME REANNOTATION</scope>
    <source>
        <strain>ATCC 204508 / S288c</strain>
    </source>
</reference>
<reference key="4">
    <citation type="journal article" date="1995" name="Yeast">
        <title>A 43.5 kb segment of yeast chromosome XIV, which contains MFA2, MEP2, CAP/SRV2, NAM9, FKB1/FPR1/RBP1, MOM22 and CPT1, predicts an adenosine deaminase gene and 14 new open reading frames.</title>
        <authorList>
            <person name="Mallet L."/>
            <person name="Bussereau F."/>
            <person name="Jacquet M."/>
        </authorList>
    </citation>
    <scope>NUCLEOTIDE SEQUENCE [GENOMIC DNA] OF 1-65</scope>
    <source>
        <strain>ATCC 204508 / S288c</strain>
    </source>
</reference>
<reference key="5">
    <citation type="submission" date="2005-05" db="UniProtKB">
        <authorList>
            <person name="Bienvenut W.V."/>
            <person name="Peters C."/>
        </authorList>
    </citation>
    <scope>PROTEIN SEQUENCE OF 2-15</scope>
    <scope>CLEAVAGE OF INITIATOR METHIONINE</scope>
    <scope>ACETYLATION AT SER-2</scope>
    <scope>IDENTIFICATION BY MASS SPECTROMETRY</scope>
</reference>
<reference key="6">
    <citation type="journal article" date="2003" name="Mol. Cell">
        <title>Assigning function to yeast proteins by integration of technologies.</title>
        <authorList>
            <person name="Hazbun T.R."/>
            <person name="Malmstroem L."/>
            <person name="Anderson S."/>
            <person name="Graczyk B.J."/>
            <person name="Fox B."/>
            <person name="Riffle M."/>
            <person name="Sundin B.A."/>
            <person name="Aranda J.D."/>
            <person name="McDonald W.H."/>
            <person name="Chiu C.-H."/>
            <person name="Snydsman B.E."/>
            <person name="Bradley P."/>
            <person name="Muller E.G.D."/>
            <person name="Fields S."/>
            <person name="Baker D."/>
            <person name="Yates J.R. III"/>
            <person name="Davis T.N."/>
        </authorList>
    </citation>
    <scope>SUBCELLULAR LOCATION [LARGE SCALE ANALYSIS]</scope>
</reference>
<reference key="7">
    <citation type="journal article" date="2003" name="Nature">
        <title>Global analysis of protein localization in budding yeast.</title>
        <authorList>
            <person name="Huh W.-K."/>
            <person name="Falvo J.V."/>
            <person name="Gerke L.C."/>
            <person name="Carroll A.S."/>
            <person name="Howson R.W."/>
            <person name="Weissman J.S."/>
            <person name="O'Shea E.K."/>
        </authorList>
    </citation>
    <scope>SUBCELLULAR LOCATION [LARGE SCALE ANALYSIS]</scope>
</reference>
<reference key="8">
    <citation type="journal article" date="2006" name="Mol. Biol. Cell">
        <title>A survey of essential gene function in the yeast cell division cycle.</title>
        <authorList>
            <person name="Yu L."/>
            <person name="Pena Castillo L."/>
            <person name="Mnaimneh S."/>
            <person name="Hughes T.R."/>
            <person name="Brown G.W."/>
        </authorList>
    </citation>
    <scope>FUNCTION</scope>
</reference>
<reference key="9">
    <citation type="journal article" date="2007" name="J. Proteome Res.">
        <title>Large-scale phosphorylation analysis of alpha-factor-arrested Saccharomyces cerevisiae.</title>
        <authorList>
            <person name="Li X."/>
            <person name="Gerber S.A."/>
            <person name="Rudner A.D."/>
            <person name="Beausoleil S.A."/>
            <person name="Haas W."/>
            <person name="Villen J."/>
            <person name="Elias J.E."/>
            <person name="Gygi S.P."/>
        </authorList>
    </citation>
    <scope>PHOSPHORYLATION [LARGE SCALE ANALYSIS] AT SER-119</scope>
    <scope>IDENTIFICATION BY MASS SPECTROMETRY [LARGE SCALE ANALYSIS]</scope>
    <source>
        <strain>ADR376</strain>
    </source>
</reference>
<reference key="10">
    <citation type="journal article" date="2008" name="Mol. Cell. Proteomics">
        <title>A multidimensional chromatography technology for in-depth phosphoproteome analysis.</title>
        <authorList>
            <person name="Albuquerque C.P."/>
            <person name="Smolka M.B."/>
            <person name="Payne S.H."/>
            <person name="Bafna V."/>
            <person name="Eng J."/>
            <person name="Zhou H."/>
        </authorList>
    </citation>
    <scope>PHOSPHORYLATION [LARGE SCALE ANALYSIS] AT SER-119</scope>
    <scope>IDENTIFICATION BY MASS SPECTROMETRY [LARGE SCALE ANALYSIS]</scope>
</reference>
<reference key="11">
    <citation type="journal article" date="2009" name="Science">
        <title>Global analysis of Cdk1 substrate phosphorylation sites provides insights into evolution.</title>
        <authorList>
            <person name="Holt L.J."/>
            <person name="Tuch B.B."/>
            <person name="Villen J."/>
            <person name="Johnson A.D."/>
            <person name="Gygi S.P."/>
            <person name="Morgan D.O."/>
        </authorList>
    </citation>
    <scope>PHOSPHORYLATION [LARGE SCALE ANALYSIS] AT SER-119</scope>
    <scope>IDENTIFICATION BY MASS SPECTROMETRY [LARGE SCALE ANALYSIS]</scope>
</reference>
<feature type="initiator methionine" description="Removed" evidence="5">
    <location>
        <position position="1"/>
    </location>
</feature>
<feature type="chain" id="PRO_0000203421" description="Processing of GAS1 and ALP protein 2">
    <location>
        <begin position="2"/>
        <end position="129"/>
    </location>
</feature>
<feature type="transmembrane region" description="Helical" evidence="1">
    <location>
        <begin position="23"/>
        <end position="42"/>
    </location>
</feature>
<feature type="region of interest" description="Disordered" evidence="2">
    <location>
        <begin position="53"/>
        <end position="92"/>
    </location>
</feature>
<feature type="region of interest" description="Disordered" evidence="2">
    <location>
        <begin position="106"/>
        <end position="129"/>
    </location>
</feature>
<feature type="coiled-coil region" evidence="1">
    <location>
        <begin position="43"/>
        <end position="116"/>
    </location>
</feature>
<feature type="compositionally biased region" description="Basic and acidic residues" evidence="2">
    <location>
        <begin position="54"/>
        <end position="75"/>
    </location>
</feature>
<feature type="compositionally biased region" description="Acidic residues" evidence="2">
    <location>
        <begin position="117"/>
        <end position="129"/>
    </location>
</feature>
<feature type="modified residue" description="N-acetylserine" evidence="5">
    <location>
        <position position="2"/>
    </location>
</feature>
<feature type="modified residue" description="Phosphoserine" evidence="7 8 9">
    <location>
        <position position="119"/>
    </location>
</feature>
<proteinExistence type="evidence at protein level"/>
<keyword id="KW-0007">Acetylation</keyword>
<keyword id="KW-0175">Coiled coil</keyword>
<keyword id="KW-0903">Direct protein sequencing</keyword>
<keyword id="KW-0256">Endoplasmic reticulum</keyword>
<keyword id="KW-0472">Membrane</keyword>
<keyword id="KW-0539">Nucleus</keyword>
<keyword id="KW-0597">Phosphoprotein</keyword>
<keyword id="KW-0653">Protein transport</keyword>
<keyword id="KW-1185">Reference proteome</keyword>
<keyword id="KW-0812">Transmembrane</keyword>
<keyword id="KW-1133">Transmembrane helix</keyword>
<keyword id="KW-0813">Transport</keyword>
<dbReference type="EMBL" id="X92517">
    <property type="protein sequence ID" value="CAA63290.1"/>
    <property type="molecule type" value="Genomic_DNA"/>
</dbReference>
<dbReference type="EMBL" id="Z71426">
    <property type="protein sequence ID" value="CAA96037.1"/>
    <property type="molecule type" value="Genomic_DNA"/>
</dbReference>
<dbReference type="EMBL" id="Z71424">
    <property type="protein sequence ID" value="CAA96033.1"/>
    <property type="molecule type" value="Genomic_DNA"/>
</dbReference>
<dbReference type="EMBL" id="BK006947">
    <property type="protein sequence ID" value="DAA10399.1"/>
    <property type="molecule type" value="Genomic_DNA"/>
</dbReference>
<dbReference type="PIR" id="S60978">
    <property type="entry name" value="S60978"/>
</dbReference>
<dbReference type="RefSeq" id="NP_014250.1">
    <property type="nucleotide sequence ID" value="NM_001182987.1"/>
</dbReference>
<dbReference type="SMR" id="P53903"/>
<dbReference type="BioGRID" id="35679">
    <property type="interactions" value="265"/>
</dbReference>
<dbReference type="FunCoup" id="P53903">
    <property type="interactions" value="89"/>
</dbReference>
<dbReference type="IntAct" id="P53903">
    <property type="interactions" value="19"/>
</dbReference>
<dbReference type="MINT" id="P53903"/>
<dbReference type="STRING" id="4932.YNL149C"/>
<dbReference type="iPTMnet" id="P53903"/>
<dbReference type="PaxDb" id="4932-YNL149C"/>
<dbReference type="PeptideAtlas" id="P53903"/>
<dbReference type="EnsemblFungi" id="YNL149C_mRNA">
    <property type="protein sequence ID" value="YNL149C"/>
    <property type="gene ID" value="YNL149C"/>
</dbReference>
<dbReference type="GeneID" id="855573"/>
<dbReference type="KEGG" id="sce:YNL149C"/>
<dbReference type="AGR" id="SGD:S000005093"/>
<dbReference type="SGD" id="S000005093">
    <property type="gene designation" value="PGA2"/>
</dbReference>
<dbReference type="VEuPathDB" id="FungiDB:YNL149C"/>
<dbReference type="eggNOG" id="ENOG502S88B">
    <property type="taxonomic scope" value="Eukaryota"/>
</dbReference>
<dbReference type="HOGENOM" id="CLU_150165_0_0_1"/>
<dbReference type="InParanoid" id="P53903"/>
<dbReference type="OMA" id="FGWGNKT"/>
<dbReference type="OrthoDB" id="4227028at2759"/>
<dbReference type="BioCyc" id="YEAST:G3O-33167-MONOMER"/>
<dbReference type="BioGRID-ORCS" id="855573">
    <property type="hits" value="5 hits in 10 CRISPR screens"/>
</dbReference>
<dbReference type="PRO" id="PR:P53903"/>
<dbReference type="Proteomes" id="UP000002311">
    <property type="component" value="Chromosome XIV"/>
</dbReference>
<dbReference type="RNAct" id="P53903">
    <property type="molecule type" value="protein"/>
</dbReference>
<dbReference type="GO" id="GO:0005783">
    <property type="term" value="C:endoplasmic reticulum"/>
    <property type="evidence" value="ECO:0007005"/>
    <property type="project" value="SGD"/>
</dbReference>
<dbReference type="GO" id="GO:0005789">
    <property type="term" value="C:endoplasmic reticulum membrane"/>
    <property type="evidence" value="ECO:0007669"/>
    <property type="project" value="UniProtKB-SubCell"/>
</dbReference>
<dbReference type="GO" id="GO:0005635">
    <property type="term" value="C:nuclear envelope"/>
    <property type="evidence" value="ECO:0007005"/>
    <property type="project" value="SGD"/>
</dbReference>
<dbReference type="GO" id="GO:0031965">
    <property type="term" value="C:nuclear membrane"/>
    <property type="evidence" value="ECO:0007669"/>
    <property type="project" value="UniProtKB-SubCell"/>
</dbReference>
<dbReference type="GO" id="GO:0015031">
    <property type="term" value="P:protein transport"/>
    <property type="evidence" value="ECO:0000315"/>
    <property type="project" value="SGD"/>
</dbReference>
<dbReference type="InterPro" id="IPR011431">
    <property type="entry name" value="Trafficking_Pga2"/>
</dbReference>
<dbReference type="PANTHER" id="PTHR28199">
    <property type="entry name" value="PROCESSING OF GAS1 AND ALP PROTEIN 2"/>
    <property type="match status" value="1"/>
</dbReference>
<dbReference type="PANTHER" id="PTHR28199:SF1">
    <property type="entry name" value="PROCESSING OF GAS1 AND ALP PROTEIN 2"/>
    <property type="match status" value="1"/>
</dbReference>
<dbReference type="Pfam" id="PF07543">
    <property type="entry name" value="PGA2"/>
    <property type="match status" value="1"/>
</dbReference>
<dbReference type="PIRSF" id="PIRSF022909">
    <property type="entry name" value="UCP022909"/>
    <property type="match status" value="1"/>
</dbReference>
<comment type="function">
    <text evidence="4">Involved in the processing and trafficking of GAS1 and PHO8 glycosylated proteins.</text>
</comment>
<comment type="subcellular location">
    <subcellularLocation>
        <location evidence="3">Endoplasmic reticulum membrane</location>
        <topology evidence="1">Single-pass membrane protein</topology>
    </subcellularLocation>
    <subcellularLocation>
        <location evidence="3">Nucleus membrane</location>
        <topology evidence="1">Single-pass membrane protein</topology>
    </subcellularLocation>
</comment>
<comment type="similarity">
    <text evidence="6">Belongs to the PGA2 family.</text>
</comment>
<sequence>MSEVAETWVDTWMAKLVNYDYKHFIRLVIIVGGYLLLRNIASRELAKKQLAAQVEKDKRDKEEKRSKDLIDKPDDAATAETTSFGWGKKTRRRVKRQQELFENALEEAKRRNQGLDPDSDADIEELLEE</sequence>